<name>PRDM2_RAT</name>
<feature type="chain" id="PRO_0000047759" description="PR domain zinc finger protein 2">
    <location>
        <begin position="1"/>
        <end position="1706"/>
    </location>
</feature>
<feature type="domain" description="SET" evidence="4">
    <location>
        <begin position="27"/>
        <end position="140"/>
    </location>
</feature>
<feature type="zinc finger region" description="C2H2-type 1" evidence="3">
    <location>
        <begin position="355"/>
        <end position="377"/>
    </location>
</feature>
<feature type="zinc finger region" description="C2H2-type 2" evidence="3">
    <location>
        <begin position="385"/>
        <end position="407"/>
    </location>
</feature>
<feature type="zinc finger region" description="C2H2-type 3" evidence="3">
    <location>
        <begin position="476"/>
        <end position="499"/>
    </location>
</feature>
<feature type="zinc finger region" description="C2H2-type 4" evidence="3">
    <location>
        <begin position="1123"/>
        <end position="1145"/>
    </location>
</feature>
<feature type="zinc finger region" description="C2H2-type 5" evidence="3">
    <location>
        <begin position="1151"/>
        <end position="1174"/>
    </location>
</feature>
<feature type="zinc finger region" description="C2H2-type 6" evidence="3">
    <location>
        <begin position="1180"/>
        <end position="1203"/>
    </location>
</feature>
<feature type="zinc finger region" description="C2H2-type 7; atypical" evidence="3">
    <location>
        <begin position="1321"/>
        <end position="1343"/>
    </location>
</feature>
<feature type="zinc finger region" description="C2H2-type 8; atypical" evidence="3">
    <location>
        <begin position="1443"/>
        <end position="1465"/>
    </location>
</feature>
<feature type="region of interest" description="Disordered" evidence="5">
    <location>
        <begin position="154"/>
        <end position="342"/>
    </location>
</feature>
<feature type="region of interest" description="Disordered" evidence="5">
    <location>
        <begin position="400"/>
        <end position="446"/>
    </location>
</feature>
<feature type="region of interest" description="Disordered" evidence="5">
    <location>
        <begin position="492"/>
        <end position="542"/>
    </location>
</feature>
<feature type="region of interest" description="Disordered" evidence="5">
    <location>
        <begin position="618"/>
        <end position="655"/>
    </location>
</feature>
<feature type="region of interest" description="Disordered" evidence="5">
    <location>
        <begin position="724"/>
        <end position="794"/>
    </location>
</feature>
<feature type="region of interest" description="Disordered" evidence="5">
    <location>
        <begin position="823"/>
        <end position="1075"/>
    </location>
</feature>
<feature type="region of interest" description="Disordered" evidence="5">
    <location>
        <begin position="1088"/>
        <end position="1112"/>
    </location>
</feature>
<feature type="region of interest" description="Disordered" evidence="5">
    <location>
        <begin position="1218"/>
        <end position="1251"/>
    </location>
</feature>
<feature type="region of interest" description="Disordered" evidence="5">
    <location>
        <begin position="1466"/>
        <end position="1563"/>
    </location>
</feature>
<feature type="compositionally biased region" description="Basic residues" evidence="5">
    <location>
        <begin position="158"/>
        <end position="183"/>
    </location>
</feature>
<feature type="compositionally biased region" description="Polar residues" evidence="5">
    <location>
        <begin position="185"/>
        <end position="199"/>
    </location>
</feature>
<feature type="compositionally biased region" description="Acidic residues" evidence="5">
    <location>
        <begin position="258"/>
        <end position="294"/>
    </location>
</feature>
<feature type="compositionally biased region" description="Basic and acidic residues" evidence="5">
    <location>
        <begin position="299"/>
        <end position="313"/>
    </location>
</feature>
<feature type="compositionally biased region" description="Basic and acidic residues" evidence="5">
    <location>
        <begin position="427"/>
        <end position="439"/>
    </location>
</feature>
<feature type="compositionally biased region" description="Low complexity" evidence="5">
    <location>
        <begin position="733"/>
        <end position="743"/>
    </location>
</feature>
<feature type="compositionally biased region" description="Polar residues" evidence="5">
    <location>
        <begin position="823"/>
        <end position="832"/>
    </location>
</feature>
<feature type="compositionally biased region" description="Basic and acidic residues" evidence="5">
    <location>
        <begin position="846"/>
        <end position="863"/>
    </location>
</feature>
<feature type="compositionally biased region" description="Polar residues" evidence="5">
    <location>
        <begin position="891"/>
        <end position="912"/>
    </location>
</feature>
<feature type="compositionally biased region" description="Polar residues" evidence="5">
    <location>
        <begin position="943"/>
        <end position="952"/>
    </location>
</feature>
<feature type="compositionally biased region" description="Pro residues" evidence="5">
    <location>
        <begin position="962"/>
        <end position="983"/>
    </location>
</feature>
<feature type="compositionally biased region" description="Polar residues" evidence="5">
    <location>
        <begin position="993"/>
        <end position="1009"/>
    </location>
</feature>
<feature type="compositionally biased region" description="Low complexity" evidence="5">
    <location>
        <begin position="1010"/>
        <end position="1019"/>
    </location>
</feature>
<feature type="compositionally biased region" description="Pro residues" evidence="5">
    <location>
        <begin position="1020"/>
        <end position="1030"/>
    </location>
</feature>
<feature type="compositionally biased region" description="Low complexity" evidence="5">
    <location>
        <begin position="1034"/>
        <end position="1062"/>
    </location>
</feature>
<feature type="compositionally biased region" description="Basic and acidic residues" evidence="5">
    <location>
        <begin position="1091"/>
        <end position="1106"/>
    </location>
</feature>
<feature type="compositionally biased region" description="Polar residues" evidence="5">
    <location>
        <begin position="1218"/>
        <end position="1227"/>
    </location>
</feature>
<feature type="compositionally biased region" description="Basic residues" evidence="5">
    <location>
        <begin position="1474"/>
        <end position="1486"/>
    </location>
</feature>
<feature type="compositionally biased region" description="Low complexity" evidence="5">
    <location>
        <begin position="1487"/>
        <end position="1498"/>
    </location>
</feature>
<feature type="compositionally biased region" description="Polar residues" evidence="5">
    <location>
        <begin position="1528"/>
        <end position="1544"/>
    </location>
</feature>
<feature type="compositionally biased region" description="Low complexity" evidence="5">
    <location>
        <begin position="1548"/>
        <end position="1563"/>
    </location>
</feature>
<feature type="modified residue" description="Phosphoserine" evidence="2">
    <location>
        <position position="416"/>
    </location>
</feature>
<feature type="modified residue" description="Phosphoserine" evidence="6">
    <location>
        <position position="637"/>
    </location>
</feature>
<feature type="modified residue" description="Phosphoserine" evidence="2">
    <location>
        <position position="738"/>
    </location>
</feature>
<feature type="modified residue" description="Phosphoserine" evidence="6">
    <location>
        <position position="776"/>
    </location>
</feature>
<feature type="modified residue" description="Phosphoserine" evidence="6">
    <location>
        <position position="780"/>
    </location>
</feature>
<feature type="modified residue" description="Phosphoserine" evidence="2">
    <location>
        <position position="791"/>
    </location>
</feature>
<feature type="cross-link" description="Glycyl lysine isopeptide (Lys-Gly) (interchain with G-Cter in SUMO2)" evidence="2">
    <location>
        <position position="645"/>
    </location>
</feature>
<feature type="cross-link" description="Glycyl lysine isopeptide (Lys-Gly) (interchain with G-Cter in SUMO2)" evidence="2">
    <location>
        <position position="684"/>
    </location>
</feature>
<feature type="cross-link" description="Glycyl lysine isopeptide (Lys-Gly) (interchain with G-Cter in SUMO2)" evidence="2">
    <location>
        <position position="686"/>
    </location>
</feature>
<feature type="cross-link" description="Glycyl lysine isopeptide (Lys-Gly) (interchain with G-Cter in SUMO2)" evidence="2">
    <location>
        <position position="769"/>
    </location>
</feature>
<feature type="cross-link" description="Glycyl lysine isopeptide (Lys-Gly) (interchain with G-Cter in SUMO2)" evidence="2">
    <location>
        <position position="860"/>
    </location>
</feature>
<feature type="cross-link" description="Glycyl lysine isopeptide (Lys-Gly) (interchain with G-Cter in SUMO2)" evidence="2">
    <location>
        <position position="870"/>
    </location>
</feature>
<feature type="cross-link" description="Glycyl lysine isopeptide (Lys-Gly) (interchain with G-Cter in SUMO2)" evidence="2">
    <location>
        <position position="1136"/>
    </location>
</feature>
<feature type="cross-link" description="Glycyl lysine isopeptide (Lys-Gly) (interchain with G-Cter in SUMO2)" evidence="2">
    <location>
        <position position="1140"/>
    </location>
</feature>
<feature type="cross-link" description="Glycyl lysine isopeptide (Lys-Gly) (interchain with G-Cter in SUMO2)" evidence="2">
    <location>
        <position position="1269"/>
    </location>
</feature>
<evidence type="ECO:0000250" key="1"/>
<evidence type="ECO:0000250" key="2">
    <source>
        <dbReference type="UniProtKB" id="Q13029"/>
    </source>
</evidence>
<evidence type="ECO:0000255" key="3">
    <source>
        <dbReference type="PROSITE-ProRule" id="PRU00042"/>
    </source>
</evidence>
<evidence type="ECO:0000255" key="4">
    <source>
        <dbReference type="PROSITE-ProRule" id="PRU00190"/>
    </source>
</evidence>
<evidence type="ECO:0000256" key="5">
    <source>
        <dbReference type="SAM" id="MobiDB-lite"/>
    </source>
</evidence>
<evidence type="ECO:0007744" key="6">
    <source>
    </source>
</evidence>
<protein>
    <recommendedName>
        <fullName>PR domain zinc finger protein 2</fullName>
        <ecNumber>2.1.1.355</ecNumber>
    </recommendedName>
    <alternativeName>
        <fullName>PR domain-containing protein 2</fullName>
    </alternativeName>
    <alternativeName>
        <fullName>Retinoblastoma protein-interacting zinc finger protein</fullName>
    </alternativeName>
    <alternativeName>
        <fullName>Zinc finger protein RIZ</fullName>
    </alternativeName>
</protein>
<proteinExistence type="evidence at protein level"/>
<dbReference type="EC" id="2.1.1.355"/>
<dbReference type="EMBL" id="U17837">
    <property type="protein sequence ID" value="AAA74468.1"/>
    <property type="molecule type" value="mRNA"/>
</dbReference>
<dbReference type="RefSeq" id="NP_001071116.1">
    <property type="nucleotide sequence ID" value="NM_001077648.1"/>
</dbReference>
<dbReference type="SMR" id="Q63755"/>
<dbReference type="DIP" id="DIP-473N"/>
<dbReference type="FunCoup" id="Q63755">
    <property type="interactions" value="3280"/>
</dbReference>
<dbReference type="STRING" id="10116.ENSRNOP00000046011"/>
<dbReference type="GlyGen" id="Q63755">
    <property type="glycosylation" value="1 site"/>
</dbReference>
<dbReference type="iPTMnet" id="Q63755"/>
<dbReference type="PhosphoSitePlus" id="Q63755"/>
<dbReference type="PaxDb" id="10116-ENSRNOP00000046011"/>
<dbReference type="GeneID" id="313678"/>
<dbReference type="KEGG" id="rno:313678"/>
<dbReference type="UCSC" id="RGD:1594531">
    <property type="organism name" value="rat"/>
</dbReference>
<dbReference type="AGR" id="RGD:1594531"/>
<dbReference type="CTD" id="7799"/>
<dbReference type="RGD" id="1594531">
    <property type="gene designation" value="Prdm2"/>
</dbReference>
<dbReference type="eggNOG" id="KOG2461">
    <property type="taxonomic scope" value="Eukaryota"/>
</dbReference>
<dbReference type="InParanoid" id="Q63755"/>
<dbReference type="OrthoDB" id="6414306at2759"/>
<dbReference type="PhylomeDB" id="Q63755"/>
<dbReference type="PRO" id="PR:Q63755"/>
<dbReference type="Proteomes" id="UP000002494">
    <property type="component" value="Unplaced"/>
</dbReference>
<dbReference type="GO" id="GO:0005634">
    <property type="term" value="C:nucleus"/>
    <property type="evidence" value="ECO:0000266"/>
    <property type="project" value="RGD"/>
</dbReference>
<dbReference type="GO" id="GO:0001228">
    <property type="term" value="F:DNA-binding transcription activator activity, RNA polymerase II-specific"/>
    <property type="evidence" value="ECO:0000266"/>
    <property type="project" value="RGD"/>
</dbReference>
<dbReference type="GO" id="GO:0000981">
    <property type="term" value="F:DNA-binding transcription factor activity, RNA polymerase II-specific"/>
    <property type="evidence" value="ECO:0000318"/>
    <property type="project" value="GO_Central"/>
</dbReference>
<dbReference type="GO" id="GO:0001227">
    <property type="term" value="F:DNA-binding transcription repressor activity, RNA polymerase II-specific"/>
    <property type="evidence" value="ECO:0000266"/>
    <property type="project" value="RGD"/>
</dbReference>
<dbReference type="GO" id="GO:0140949">
    <property type="term" value="F:histone H3K9 trimethyltransferase activity"/>
    <property type="evidence" value="ECO:0007669"/>
    <property type="project" value="UniProtKB-EC"/>
</dbReference>
<dbReference type="GO" id="GO:0000977">
    <property type="term" value="F:RNA polymerase II transcription regulatory region sequence-specific DNA binding"/>
    <property type="evidence" value="ECO:0000266"/>
    <property type="project" value="RGD"/>
</dbReference>
<dbReference type="GO" id="GO:0043565">
    <property type="term" value="F:sequence-specific DNA binding"/>
    <property type="evidence" value="ECO:0000266"/>
    <property type="project" value="RGD"/>
</dbReference>
<dbReference type="GO" id="GO:0008270">
    <property type="term" value="F:zinc ion binding"/>
    <property type="evidence" value="ECO:0007669"/>
    <property type="project" value="UniProtKB-KW"/>
</dbReference>
<dbReference type="GO" id="GO:0008340">
    <property type="term" value="P:determination of adult lifespan"/>
    <property type="evidence" value="ECO:0000266"/>
    <property type="project" value="RGD"/>
</dbReference>
<dbReference type="GO" id="GO:0032259">
    <property type="term" value="P:methylation"/>
    <property type="evidence" value="ECO:0007669"/>
    <property type="project" value="UniProtKB-KW"/>
</dbReference>
<dbReference type="GO" id="GO:0000122">
    <property type="term" value="P:negative regulation of transcription by RNA polymerase II"/>
    <property type="evidence" value="ECO:0000266"/>
    <property type="project" value="RGD"/>
</dbReference>
<dbReference type="GO" id="GO:0045944">
    <property type="term" value="P:positive regulation of transcription by RNA polymerase II"/>
    <property type="evidence" value="ECO:0000266"/>
    <property type="project" value="RGD"/>
</dbReference>
<dbReference type="GO" id="GO:0006357">
    <property type="term" value="P:regulation of transcription by RNA polymerase II"/>
    <property type="evidence" value="ECO:0000318"/>
    <property type="project" value="GO_Central"/>
</dbReference>
<dbReference type="GO" id="GO:0032355">
    <property type="term" value="P:response to estradiol"/>
    <property type="evidence" value="ECO:0000314"/>
    <property type="project" value="RGD"/>
</dbReference>
<dbReference type="CDD" id="cd19188">
    <property type="entry name" value="PR-SET_PRDM2"/>
    <property type="match status" value="1"/>
</dbReference>
<dbReference type="FunFam" id="2.170.270.10:FF:000026">
    <property type="entry name" value="PR domain zinc finger protein 2"/>
    <property type="match status" value="1"/>
</dbReference>
<dbReference type="FunFam" id="3.30.160.60:FF:000724">
    <property type="entry name" value="PR domain zinc finger protein 2"/>
    <property type="match status" value="1"/>
</dbReference>
<dbReference type="FunFam" id="3.30.160.60:FF:002781">
    <property type="entry name" value="PR/SET domain 2"/>
    <property type="match status" value="1"/>
</dbReference>
<dbReference type="Gene3D" id="3.30.160.60">
    <property type="entry name" value="Classic Zinc Finger"/>
    <property type="match status" value="3"/>
</dbReference>
<dbReference type="Gene3D" id="2.170.270.10">
    <property type="entry name" value="SET domain"/>
    <property type="match status" value="1"/>
</dbReference>
<dbReference type="InterPro" id="IPR009170">
    <property type="entry name" value="PRDM2"/>
</dbReference>
<dbReference type="InterPro" id="IPR044414">
    <property type="entry name" value="PRDM2_PR-SET"/>
</dbReference>
<dbReference type="InterPro" id="IPR001214">
    <property type="entry name" value="SET_dom"/>
</dbReference>
<dbReference type="InterPro" id="IPR046341">
    <property type="entry name" value="SET_dom_sf"/>
</dbReference>
<dbReference type="InterPro" id="IPR050331">
    <property type="entry name" value="Zinc_finger"/>
</dbReference>
<dbReference type="InterPro" id="IPR036236">
    <property type="entry name" value="Znf_C2H2_sf"/>
</dbReference>
<dbReference type="InterPro" id="IPR013087">
    <property type="entry name" value="Znf_C2H2_type"/>
</dbReference>
<dbReference type="PANTHER" id="PTHR16515">
    <property type="entry name" value="PR DOMAIN ZINC FINGER PROTEIN"/>
    <property type="match status" value="1"/>
</dbReference>
<dbReference type="PANTHER" id="PTHR16515:SF37">
    <property type="entry name" value="PR DOMAIN ZINC FINGER PROTEIN 2"/>
    <property type="match status" value="1"/>
</dbReference>
<dbReference type="Pfam" id="PF21549">
    <property type="entry name" value="PRDM2_PR"/>
    <property type="match status" value="1"/>
</dbReference>
<dbReference type="Pfam" id="PF00096">
    <property type="entry name" value="zf-C2H2"/>
    <property type="match status" value="2"/>
</dbReference>
<dbReference type="Pfam" id="PF13912">
    <property type="entry name" value="zf-C2H2_6"/>
    <property type="match status" value="2"/>
</dbReference>
<dbReference type="PIRSF" id="PIRSF002395">
    <property type="entry name" value="RIZ_SET"/>
    <property type="match status" value="1"/>
</dbReference>
<dbReference type="SMART" id="SM00317">
    <property type="entry name" value="SET"/>
    <property type="match status" value="1"/>
</dbReference>
<dbReference type="SMART" id="SM00355">
    <property type="entry name" value="ZnF_C2H2"/>
    <property type="match status" value="8"/>
</dbReference>
<dbReference type="SUPFAM" id="SSF57667">
    <property type="entry name" value="beta-beta-alpha zinc fingers"/>
    <property type="match status" value="3"/>
</dbReference>
<dbReference type="SUPFAM" id="SSF82199">
    <property type="entry name" value="SET domain"/>
    <property type="match status" value="1"/>
</dbReference>
<dbReference type="PROSITE" id="PS50280">
    <property type="entry name" value="SET"/>
    <property type="match status" value="1"/>
</dbReference>
<dbReference type="PROSITE" id="PS00028">
    <property type="entry name" value="ZINC_FINGER_C2H2_1"/>
    <property type="match status" value="6"/>
</dbReference>
<dbReference type="PROSITE" id="PS50157">
    <property type="entry name" value="ZINC_FINGER_C2H2_2"/>
    <property type="match status" value="7"/>
</dbReference>
<gene>
    <name type="primary">Prdm2</name>
    <name type="synonym">Riz</name>
</gene>
<organism>
    <name type="scientific">Rattus norvegicus</name>
    <name type="common">Rat</name>
    <dbReference type="NCBI Taxonomy" id="10116"/>
    <lineage>
        <taxon>Eukaryota</taxon>
        <taxon>Metazoa</taxon>
        <taxon>Chordata</taxon>
        <taxon>Craniata</taxon>
        <taxon>Vertebrata</taxon>
        <taxon>Euteleostomi</taxon>
        <taxon>Mammalia</taxon>
        <taxon>Eutheria</taxon>
        <taxon>Euarchontoglires</taxon>
        <taxon>Glires</taxon>
        <taxon>Rodentia</taxon>
        <taxon>Myomorpha</taxon>
        <taxon>Muroidea</taxon>
        <taxon>Muridae</taxon>
        <taxon>Murinae</taxon>
        <taxon>Rattus</taxon>
    </lineage>
</organism>
<keyword id="KW-0010">Activator</keyword>
<keyword id="KW-0238">DNA-binding</keyword>
<keyword id="KW-1017">Isopeptide bond</keyword>
<keyword id="KW-0479">Metal-binding</keyword>
<keyword id="KW-0489">Methyltransferase</keyword>
<keyword id="KW-0539">Nucleus</keyword>
<keyword id="KW-0597">Phosphoprotein</keyword>
<keyword id="KW-1185">Reference proteome</keyword>
<keyword id="KW-0677">Repeat</keyword>
<keyword id="KW-0949">S-adenosyl-L-methionine</keyword>
<keyword id="KW-0804">Transcription</keyword>
<keyword id="KW-0805">Transcription regulation</keyword>
<keyword id="KW-0808">Transferase</keyword>
<keyword id="KW-0832">Ubl conjugation</keyword>
<keyword id="KW-0862">Zinc</keyword>
<keyword id="KW-0863">Zinc-finger</keyword>
<sequence>MHQNTESVAATETLAEVPEHVLRGLPEEVRLFPSAVDKTRIGVWATKPILKGKKFGPFVGDKKKRSQVRNNVYMWEVYYPNLGWMCIDATDPEKGNWLRYVNWACSGEEQNLFPLEINRAIYYKTLKPIAPGEELLVWYNGEDNPEIAAAIEEERASARSKRSSPKSRRGKKKSHENKNKGIRTHPTQLKASELDSTFANMRGSAEGPKEEDERPLASAPEQPAPLPEVGNQDAVPQVAIPLPACEPQPEVDGKQEVTDCEVNDVEEEELEEEEELEEEEEEELGEDGVEEADMPNESSAKEPEIRCEEKPEDLLEEPQSMSNEAREDSPDVTPPPHTPRAREEANGDVLETFMFPCQHCERKFATKQGLERHMHIHISTINHAFKCKYCGKRFGTQINRRRHERRHETGLKRRPSMTLQSSEDPDDGKGENVTSKDESSPPQLGQDCLILNSEKTSQEVLNSSFVEENGEVKELHPCKYCKKVFGTHTNMRRHQRRVHERHLIPKGVRRKGGLLEEPQPPAEQAPPSQNVYVPSTEPEEEGETDDVYIMDISSNISENLNYYIDGKIQTNSSTSNCDVIEMESNSAHLYGIDCLLTPVTVEITQNIKSTQVSVTDDLLKDSPSSTNCESKKRRTASPPVLPKIKTETESDSTAPSCSLSLPLSISTAEVVSFHKEKGVYLSSKLKQLLQTQDKLTLPAGFSAAEIPKLGPVCASAPASMLPVTSSRFKRRTSSPPSSPQHSPALRDFGKPNDGKAAWTDTVLTSKKPKLESRSDSPAWSLSGRDERETGSPPCFDEYKISKEWAASSTFSSVCNQQPLDLSSGVKQKSEGTGKTPVPWESVLDLSVHKKPCDSEGKEFKENHLAQPAAKKKKPTTCMLQKVLLNEYNGVSLPTETTPEVTRSPSPCKSPDTQPDPELGPDSSCSVPTAESPPEVVGPSSPPLQTASLSSGQLPPLLTPTEPSSPPPCPPVLTVATPPPPLLPTVPLSHPSSDASPQQCPSPFSNTTAQSPLPILSPTVSPSPSPIPPVEPLMSAASPGPPTLSSSSSSSSSFPSSSCSSTSPSPPPLSAVSSVVSSGDNLEASLPAVTFKQEESESEGLKPKEEAPPAGGQSVVQETFSKNFICNVCESPFLSIKDLTKHLSVHAEEWPFKCEFCVQLFKVKTDLSEHRFLLHGVGNIFVCSVCKKEFAFLCNLQQHQRDLHPDEVCTHHEFESGTLRPQNFTDPSKANVEHMPSLPEEPLETSREEELNDSSEELYTTIKIMASGIKTKDPDVRLGLNQHYPSFKPPPFQYHHRNPMGIGVTATNFTTHNIPQTFTTAIRCTKCGKGVDNMPELHKHILACASASDKKRYTPKKNPVPLKQTVQPKNGVVVLDNSGKNAFRRMGQPKRLSFNVELGKMSPNKLKLSALKKKNQLVQKAILQKNRAAKQKADLRDTSEASSHICPYCDREFTYIGSLNKHAAFSCPKKPLSPSKRKVSHSSKKGGHASSSSSDRNSSCHPRRRTADTEIKMQSTQAPLGKTRARSTGPAQASLPSSSFRSRQNVKFAASVKSKKASSSSLRNSSPIRMAKITHVEGKKPKAVAKSHSAQLSSKSSRGLHVRVQKSKAVIQSKTALASKRRTDRFIVKSRERSGGPITRSLQLAAAADLSESRREDSSARHELKDFSYSLRLASRCGSSTASYITRQCRKVKAAAATPFQGPFLKE</sequence>
<accession>Q63755</accession>
<comment type="function">
    <text evidence="1">S-adenosyl-L-methionine-dependent histone methyltransferase that specifically methylates 'Lys-9' of histone H3. May function as a DNA-binding transcription factor. Binds to the macrophage-specific TPA-responsive element (MTE) of the HMOX1 (heme oxygenase 1) gene and may act as a transcriptional activator of this gene (By similarity).</text>
</comment>
<comment type="catalytic activity">
    <reaction>
        <text>L-lysyl-[histone] + S-adenosyl-L-methionine = N(6)-methyl-L-lysyl-[histone] + S-adenosyl-L-homocysteine + H(+)</text>
        <dbReference type="Rhea" id="RHEA:10024"/>
        <dbReference type="Rhea" id="RHEA-COMP:9845"/>
        <dbReference type="Rhea" id="RHEA-COMP:9846"/>
        <dbReference type="ChEBI" id="CHEBI:15378"/>
        <dbReference type="ChEBI" id="CHEBI:29969"/>
        <dbReference type="ChEBI" id="CHEBI:57856"/>
        <dbReference type="ChEBI" id="CHEBI:59789"/>
        <dbReference type="ChEBI" id="CHEBI:61929"/>
    </reaction>
</comment>
<comment type="catalytic activity">
    <reaction>
        <text>L-lysyl(9)-[histone H3] + 3 S-adenosyl-L-methionine = N(6),N(6),N(6)-trimethyl-L-lysyl(9)-[histone H3] + 3 S-adenosyl-L-homocysteine + 3 H(+)</text>
        <dbReference type="Rhea" id="RHEA:60276"/>
        <dbReference type="Rhea" id="RHEA-COMP:15538"/>
        <dbReference type="Rhea" id="RHEA-COMP:15546"/>
        <dbReference type="ChEBI" id="CHEBI:15378"/>
        <dbReference type="ChEBI" id="CHEBI:29969"/>
        <dbReference type="ChEBI" id="CHEBI:57856"/>
        <dbReference type="ChEBI" id="CHEBI:59789"/>
        <dbReference type="ChEBI" id="CHEBI:61961"/>
        <dbReference type="EC" id="2.1.1.355"/>
    </reaction>
</comment>
<comment type="subunit">
    <text evidence="1">Binds to the retinoblastoma protein (RB). Interacts with GATA3 (By similarity).</text>
</comment>
<comment type="subcellular location">
    <subcellularLocation>
        <location evidence="1">Nucleus</location>
    </subcellularLocation>
</comment>
<comment type="similarity">
    <text evidence="4">Belongs to the class V-like SAM-binding methyltransferase superfamily.</text>
</comment>
<reference key="1">
    <citation type="journal article" date="1995" name="Proc. Natl. Acad. Sci. U.S.A.">
        <title>The retinoblastoma protein binds to RIZ, a zinc-finger protein that shares an epitope with the adenovirus E1A protein.</title>
        <authorList>
            <person name="Buyse I.M."/>
            <person name="Shao G."/>
            <person name="Huang S."/>
        </authorList>
    </citation>
    <scope>NUCLEOTIDE SEQUENCE [MRNA]</scope>
    <source>
        <tissue>Heart</tissue>
    </source>
</reference>
<reference key="2">
    <citation type="journal article" date="2012" name="Nat. Commun.">
        <title>Quantitative maps of protein phosphorylation sites across 14 different rat organs and tissues.</title>
        <authorList>
            <person name="Lundby A."/>
            <person name="Secher A."/>
            <person name="Lage K."/>
            <person name="Nordsborg N.B."/>
            <person name="Dmytriyev A."/>
            <person name="Lundby C."/>
            <person name="Olsen J.V."/>
        </authorList>
    </citation>
    <scope>PHOSPHORYLATION [LARGE SCALE ANALYSIS] AT SER-637; SER-776 AND SER-780</scope>
    <scope>IDENTIFICATION BY MASS SPECTROMETRY [LARGE SCALE ANALYSIS]</scope>
</reference>